<comment type="catalytic activity">
    <reaction>
        <text>5-amino-1-(5-phospho-D-ribosyl)imidazole-4-carboxylate + L-aspartate + ATP = (2S)-2-[5-amino-1-(5-phospho-beta-D-ribosyl)imidazole-4-carboxamido]succinate + ADP + phosphate + 2 H(+)</text>
        <dbReference type="Rhea" id="RHEA:22628"/>
        <dbReference type="ChEBI" id="CHEBI:15378"/>
        <dbReference type="ChEBI" id="CHEBI:29991"/>
        <dbReference type="ChEBI" id="CHEBI:30616"/>
        <dbReference type="ChEBI" id="CHEBI:43474"/>
        <dbReference type="ChEBI" id="CHEBI:58443"/>
        <dbReference type="ChEBI" id="CHEBI:77657"/>
        <dbReference type="ChEBI" id="CHEBI:456216"/>
        <dbReference type="EC" id="6.3.2.6"/>
    </reaction>
</comment>
<comment type="pathway">
    <text>Purine metabolism; IMP biosynthesis via de novo pathway; 5-amino-1-(5-phospho-D-ribosyl)imidazole-4-carboxamide from 5-amino-1-(5-phospho-D-ribosyl)imidazole-4-carboxylate: step 1/2.</text>
</comment>
<comment type="similarity">
    <text evidence="1">Belongs to the SAICAR synthetase family.</text>
</comment>
<feature type="chain" id="PRO_0000100912" description="Phosphoribosylaminoimidazole-succinocarboxamide synthase">
    <location>
        <begin position="1"/>
        <end position="248"/>
    </location>
</feature>
<evidence type="ECO:0000305" key="1"/>
<sequence length="248" mass="28244">MDVKIDGPLYSGKAKDVLLTDDPEIVAVRFRDDITAGDGEKKDTLEMKGYYNSVISAKIFEVLEEAGVPTQYLELREPGCILARKLEMIPIEVITRNIAAGSIVRRFPFTEGQEFVPPLIQMDYKSDEHGDPMLNDDIILALGIATRDELEEIRRITLHINSVLRDFLKSRGLILPDFKLEFGRDSSGRIRLGDEVSPDTCRLWDMETGEPLDKDIFRRGEEGVVGAYRRVARMILDDEDIERWNVEL</sequence>
<protein>
    <recommendedName>
        <fullName>Phosphoribosylaminoimidazole-succinocarboxamide synthase</fullName>
        <ecNumber>6.3.2.6</ecNumber>
    </recommendedName>
    <alternativeName>
        <fullName>SAICAR synthetase</fullName>
    </alternativeName>
</protein>
<gene>
    <name type="primary">purC</name>
    <name type="ordered locus">MTH_170</name>
</gene>
<name>PUR7_METTH</name>
<proteinExistence type="inferred from homology"/>
<organism>
    <name type="scientific">Methanothermobacter thermautotrophicus (strain ATCC 29096 / DSM 1053 / JCM 10044 / NBRC 100330 / Delta H)</name>
    <name type="common">Methanobacterium thermoautotrophicum</name>
    <dbReference type="NCBI Taxonomy" id="187420"/>
    <lineage>
        <taxon>Archaea</taxon>
        <taxon>Methanobacteriati</taxon>
        <taxon>Methanobacteriota</taxon>
        <taxon>Methanomada group</taxon>
        <taxon>Methanobacteria</taxon>
        <taxon>Methanobacteriales</taxon>
        <taxon>Methanobacteriaceae</taxon>
        <taxon>Methanothermobacter</taxon>
    </lineage>
</organism>
<reference key="1">
    <citation type="journal article" date="1997" name="J. Bacteriol.">
        <title>Complete genome sequence of Methanobacterium thermoautotrophicum deltaH: functional analysis and comparative genomics.</title>
        <authorList>
            <person name="Smith D.R."/>
            <person name="Doucette-Stamm L.A."/>
            <person name="Deloughery C."/>
            <person name="Lee H.-M."/>
            <person name="Dubois J."/>
            <person name="Aldredge T."/>
            <person name="Bashirzadeh R."/>
            <person name="Blakely D."/>
            <person name="Cook R."/>
            <person name="Gilbert K."/>
            <person name="Harrison D."/>
            <person name="Hoang L."/>
            <person name="Keagle P."/>
            <person name="Lumm W."/>
            <person name="Pothier B."/>
            <person name="Qiu D."/>
            <person name="Spadafora R."/>
            <person name="Vicare R."/>
            <person name="Wang Y."/>
            <person name="Wierzbowski J."/>
            <person name="Gibson R."/>
            <person name="Jiwani N."/>
            <person name="Caruso A."/>
            <person name="Bush D."/>
            <person name="Safer H."/>
            <person name="Patwell D."/>
            <person name="Prabhakar S."/>
            <person name="McDougall S."/>
            <person name="Shimer G."/>
            <person name="Goyal A."/>
            <person name="Pietrovski S."/>
            <person name="Church G.M."/>
            <person name="Daniels C.J."/>
            <person name="Mao J.-I."/>
            <person name="Rice P."/>
            <person name="Noelling J."/>
            <person name="Reeve J.N."/>
        </authorList>
    </citation>
    <scope>NUCLEOTIDE SEQUENCE [LARGE SCALE GENOMIC DNA]</scope>
    <source>
        <strain>ATCC 29096 / DSM 1053 / JCM 10044 / NBRC 100330 / Delta H</strain>
    </source>
</reference>
<dbReference type="EC" id="6.3.2.6"/>
<dbReference type="EMBL" id="AE000666">
    <property type="protein sequence ID" value="AAB84676.1"/>
    <property type="molecule type" value="Genomic_DNA"/>
</dbReference>
<dbReference type="PIR" id="D69094">
    <property type="entry name" value="D69094"/>
</dbReference>
<dbReference type="RefSeq" id="WP_010875809.1">
    <property type="nucleotide sequence ID" value="NC_000916.1"/>
</dbReference>
<dbReference type="SMR" id="O26272"/>
<dbReference type="FunCoup" id="O26272">
    <property type="interactions" value="119"/>
</dbReference>
<dbReference type="STRING" id="187420.MTH_170"/>
<dbReference type="PaxDb" id="187420-MTH_170"/>
<dbReference type="EnsemblBacteria" id="AAB84676">
    <property type="protein sequence ID" value="AAB84676"/>
    <property type="gene ID" value="MTH_170"/>
</dbReference>
<dbReference type="GeneID" id="1470131"/>
<dbReference type="GeneID" id="77400730"/>
<dbReference type="KEGG" id="mth:MTH_170"/>
<dbReference type="PATRIC" id="fig|187420.15.peg.143"/>
<dbReference type="HOGENOM" id="CLU_061495_2_0_2"/>
<dbReference type="InParanoid" id="O26272"/>
<dbReference type="UniPathway" id="UPA00074">
    <property type="reaction ID" value="UER00131"/>
</dbReference>
<dbReference type="Proteomes" id="UP000005223">
    <property type="component" value="Chromosome"/>
</dbReference>
<dbReference type="GO" id="GO:0005524">
    <property type="term" value="F:ATP binding"/>
    <property type="evidence" value="ECO:0007669"/>
    <property type="project" value="UniProtKB-KW"/>
</dbReference>
<dbReference type="GO" id="GO:0004639">
    <property type="term" value="F:phosphoribosylaminoimidazolesuccinocarboxamide synthase activity"/>
    <property type="evidence" value="ECO:0007669"/>
    <property type="project" value="UniProtKB-UniRule"/>
</dbReference>
<dbReference type="GO" id="GO:0006189">
    <property type="term" value="P:'de novo' IMP biosynthetic process"/>
    <property type="evidence" value="ECO:0007669"/>
    <property type="project" value="UniProtKB-UniRule"/>
</dbReference>
<dbReference type="GO" id="GO:0009236">
    <property type="term" value="P:cobalamin biosynthetic process"/>
    <property type="evidence" value="ECO:0007669"/>
    <property type="project" value="InterPro"/>
</dbReference>
<dbReference type="CDD" id="cd01415">
    <property type="entry name" value="SAICAR_synt_PurC"/>
    <property type="match status" value="1"/>
</dbReference>
<dbReference type="FunFam" id="3.30.470.20:FF:000006">
    <property type="entry name" value="Phosphoribosylaminoimidazole-succinocarboxamide synthase"/>
    <property type="match status" value="1"/>
</dbReference>
<dbReference type="Gene3D" id="3.30.470.20">
    <property type="entry name" value="ATP-grasp fold, B domain"/>
    <property type="match status" value="1"/>
</dbReference>
<dbReference type="Gene3D" id="3.30.200.20">
    <property type="entry name" value="Phosphorylase Kinase, domain 1"/>
    <property type="match status" value="1"/>
</dbReference>
<dbReference type="HAMAP" id="MF_00137">
    <property type="entry name" value="SAICAR_synth"/>
    <property type="match status" value="1"/>
</dbReference>
<dbReference type="InterPro" id="IPR028923">
    <property type="entry name" value="SAICAR_synt/ADE2_N"/>
</dbReference>
<dbReference type="InterPro" id="IPR033934">
    <property type="entry name" value="SAICAR_synt_PurC"/>
</dbReference>
<dbReference type="InterPro" id="IPR001636">
    <property type="entry name" value="SAICAR_synth"/>
</dbReference>
<dbReference type="InterPro" id="IPR050089">
    <property type="entry name" value="SAICAR_synthetase"/>
</dbReference>
<dbReference type="InterPro" id="IPR018236">
    <property type="entry name" value="SAICAR_synthetase_CS"/>
</dbReference>
<dbReference type="NCBIfam" id="TIGR00081">
    <property type="entry name" value="purC"/>
    <property type="match status" value="1"/>
</dbReference>
<dbReference type="PANTHER" id="PTHR43599">
    <property type="entry name" value="MULTIFUNCTIONAL PROTEIN ADE2"/>
    <property type="match status" value="1"/>
</dbReference>
<dbReference type="PANTHER" id="PTHR43599:SF3">
    <property type="entry name" value="SI:DKEY-6E2.2"/>
    <property type="match status" value="1"/>
</dbReference>
<dbReference type="Pfam" id="PF01259">
    <property type="entry name" value="SAICAR_synt"/>
    <property type="match status" value="1"/>
</dbReference>
<dbReference type="SUPFAM" id="SSF56104">
    <property type="entry name" value="SAICAR synthase-like"/>
    <property type="match status" value="1"/>
</dbReference>
<dbReference type="PROSITE" id="PS01057">
    <property type="entry name" value="SAICAR_SYNTHETASE_1"/>
    <property type="match status" value="1"/>
</dbReference>
<dbReference type="PROSITE" id="PS01058">
    <property type="entry name" value="SAICAR_SYNTHETASE_2"/>
    <property type="match status" value="1"/>
</dbReference>
<accession>O26272</accession>
<keyword id="KW-0067">ATP-binding</keyword>
<keyword id="KW-0436">Ligase</keyword>
<keyword id="KW-0547">Nucleotide-binding</keyword>
<keyword id="KW-0658">Purine biosynthesis</keyword>
<keyword id="KW-1185">Reference proteome</keyword>